<keyword id="KW-1221">Calcium-activated potassium channel impairing toxin</keyword>
<keyword id="KW-0903">Direct protein sequencing</keyword>
<keyword id="KW-1015">Disulfide bond</keyword>
<keyword id="KW-0872">Ion channel impairing toxin</keyword>
<keyword id="KW-0528">Neurotoxin</keyword>
<keyword id="KW-0632">Potassium channel impairing toxin</keyword>
<keyword id="KW-0964">Secreted</keyword>
<keyword id="KW-0800">Toxin</keyword>
<sequence>GLIDVRCYASRECWEPCRKVTGSGQAKCQNNQCRCY</sequence>
<organism>
    <name type="scientific">Buthus paris</name>
    <name type="common">Scorpion</name>
    <name type="synonym">Buthus occitanus paris</name>
    <dbReference type="NCBI Taxonomy" id="1388771"/>
    <lineage>
        <taxon>Eukaryota</taxon>
        <taxon>Metazoa</taxon>
        <taxon>Ecdysozoa</taxon>
        <taxon>Arthropoda</taxon>
        <taxon>Chelicerata</taxon>
        <taxon>Arachnida</taxon>
        <taxon>Scorpiones</taxon>
        <taxon>Buthida</taxon>
        <taxon>Buthoidea</taxon>
        <taxon>Buthidae</taxon>
        <taxon>Buthus</taxon>
    </lineage>
</organism>
<comment type="function">
    <text evidence="2 3">Poorly competes with (125)I-kaliotoxin binding on rat brain synaptosome (IC(50)&gt;100 nM). Is a poor Kv1.3/KCNA3 ligand (PubMed:23523531). May have as real target KCa1.1/KCNMA1 channel (By similarity). Shows weak toxicity on mice (PubMed:23523531).</text>
</comment>
<comment type="subcellular location">
    <subcellularLocation>
        <location evidence="3">Secreted</location>
    </subcellularLocation>
</comment>
<comment type="tissue specificity">
    <text evidence="5">Expressed by the venom gland.</text>
</comment>
<comment type="domain">
    <text evidence="2">Has the structural arrangement of an alpha-helix connected to a beta-sheet by disulfide bonds (CSalpha/beta).</text>
</comment>
<comment type="mass spectrometry"/>
<comment type="toxic dose">
    <text evidence="3">LD(50) is 14 ug/kg by intracerebroventricular injection into mice.</text>
</comment>
<comment type="similarity">
    <text evidence="5">Belongs to the short scorpion toxin superfamily. Potassium channel inhibitor family. Alpha-KTx 16 subfamily.</text>
</comment>
<accession>P0DL46</accession>
<protein>
    <recommendedName>
        <fullName evidence="4">Potassium channel toxin alpha-KTx 16.9</fullName>
    </recommendedName>
    <alternativeName>
        <fullName evidence="4">Toxin BoP2</fullName>
    </alternativeName>
</protein>
<reference key="1">
    <citation type="journal article" date="2013" name="Toxicon">
        <title>Characterization of the first K+ channel blockers from the venom of the Moroccan scorpion Buthus occitanus Paris.</title>
        <authorList>
            <person name="Martin-Eauclaire M.F."/>
            <person name="Ceard B."/>
            <person name="Belghazi M."/>
            <person name="Lebrun R."/>
            <person name="Bougis P.E."/>
        </authorList>
    </citation>
    <scope>PROTEIN SEQUENCE</scope>
    <scope>FUNCTION</scope>
    <scope>SUBCELLULAR LOCATION</scope>
    <scope>MASS SPECTROMETRY</scope>
    <scope>TOXIC DOSE</scope>
    <scope>NOMENCLATURE</scope>
    <source>
        <tissue>Venom</tissue>
    </source>
</reference>
<evidence type="ECO:0000250" key="1"/>
<evidence type="ECO:0000250" key="2">
    <source>
        <dbReference type="UniProtKB" id="Q9NBG9"/>
    </source>
</evidence>
<evidence type="ECO:0000269" key="3">
    <source>
    </source>
</evidence>
<evidence type="ECO:0000303" key="4">
    <source>
    </source>
</evidence>
<evidence type="ECO:0000305" key="5"/>
<name>KA169_BUTPA</name>
<proteinExistence type="evidence at protein level"/>
<feature type="chain" id="PRO_0000433146" description="Potassium channel toxin alpha-KTx 16.9" evidence="3">
    <location>
        <begin position="1"/>
        <end position="36"/>
    </location>
</feature>
<feature type="site" description="Basic residue of the functional dyad" evidence="1">
    <location>
        <position position="27"/>
    </location>
</feature>
<feature type="site" description="Aromatic residue of the functional dyad" evidence="1">
    <location>
        <position position="36"/>
    </location>
</feature>
<feature type="disulfide bond" evidence="1">
    <location>
        <begin position="7"/>
        <end position="28"/>
    </location>
</feature>
<feature type="disulfide bond" evidence="1">
    <location>
        <begin position="13"/>
        <end position="33"/>
    </location>
</feature>
<feature type="disulfide bond" evidence="1">
    <location>
        <begin position="17"/>
        <end position="35"/>
    </location>
</feature>
<dbReference type="SMR" id="P0DL46"/>
<dbReference type="GO" id="GO:0005576">
    <property type="term" value="C:extracellular region"/>
    <property type="evidence" value="ECO:0007669"/>
    <property type="project" value="UniProtKB-SubCell"/>
</dbReference>
<dbReference type="GO" id="GO:0008200">
    <property type="term" value="F:ion channel inhibitor activity"/>
    <property type="evidence" value="ECO:0007669"/>
    <property type="project" value="InterPro"/>
</dbReference>
<dbReference type="GO" id="GO:0015459">
    <property type="term" value="F:potassium channel regulator activity"/>
    <property type="evidence" value="ECO:0007669"/>
    <property type="project" value="UniProtKB-KW"/>
</dbReference>
<dbReference type="GO" id="GO:0090729">
    <property type="term" value="F:toxin activity"/>
    <property type="evidence" value="ECO:0007669"/>
    <property type="project" value="UniProtKB-KW"/>
</dbReference>
<dbReference type="Gene3D" id="3.30.30.10">
    <property type="entry name" value="Knottin, scorpion toxin-like"/>
    <property type="match status" value="1"/>
</dbReference>
<dbReference type="InterPro" id="IPR036574">
    <property type="entry name" value="Scorpion_toxin-like_sf"/>
</dbReference>
<dbReference type="InterPro" id="IPR001947">
    <property type="entry name" value="Scorpion_toxinS_K_inh"/>
</dbReference>
<dbReference type="Pfam" id="PF00451">
    <property type="entry name" value="Toxin_2"/>
    <property type="match status" value="1"/>
</dbReference>
<dbReference type="SUPFAM" id="SSF57095">
    <property type="entry name" value="Scorpion toxin-like"/>
    <property type="match status" value="1"/>
</dbReference>
<dbReference type="PROSITE" id="PS01138">
    <property type="entry name" value="SCORP_SHORT_TOXIN"/>
    <property type="match status" value="1"/>
</dbReference>